<keyword id="KW-0143">Chaperone</keyword>
<keyword id="KW-0963">Cytoplasm</keyword>
<keyword id="KW-0996">Nickel insertion</keyword>
<sequence length="270" mass="30533">MWQGNLELIYKQKNLATEINHVYATAPLKVQRPFYPEGKNLCHTVILHTAGGIVGGDVLQQKIHLQAATNALITTASAGKVYQSNGQMAQQLIEIKIDDNASLEWLPQETIIFNGAAFRQHLRVDLGENSSWLGWEITRFGRSARGEKFLAGEWHSNWEIWRSGQPLWLDRSCLLGGKMIEGFSGLNDSALIGTLVYIGQPVGRNLIEKVRDFSLEGERGVTNTLGDGLLCRYRGNSSGEVRQWFQQVWQILRREMSDQEAIIPRVWLSW</sequence>
<comment type="function">
    <text evidence="1">Required for maturation of urease via the functional incorporation of the urease nickel metallocenter.</text>
</comment>
<comment type="subunit">
    <text evidence="1">UreD, UreF and UreG form a complex that acts as a GTP-hydrolysis-dependent molecular chaperone, activating the urease apoprotein by helping to assemble the nickel containing metallocenter of UreC. The UreE protein probably delivers the nickel.</text>
</comment>
<comment type="subcellular location">
    <subcellularLocation>
        <location evidence="1">Cytoplasm</location>
    </subcellularLocation>
</comment>
<comment type="similarity">
    <text evidence="1">Belongs to the UreD family.</text>
</comment>
<gene>
    <name evidence="1" type="primary">ureD</name>
    <name type="ordered locus">MAE_04510</name>
</gene>
<name>URED_MICAN</name>
<feature type="chain" id="PRO_0000346581" description="Urease accessory protein UreD">
    <location>
        <begin position="1"/>
        <end position="270"/>
    </location>
</feature>
<proteinExistence type="inferred from homology"/>
<evidence type="ECO:0000255" key="1">
    <source>
        <dbReference type="HAMAP-Rule" id="MF_01384"/>
    </source>
</evidence>
<dbReference type="EMBL" id="AP009552">
    <property type="protein sequence ID" value="BAG00273.1"/>
    <property type="molecule type" value="Genomic_DNA"/>
</dbReference>
<dbReference type="RefSeq" id="WP_012264105.1">
    <property type="nucleotide sequence ID" value="NC_010296.1"/>
</dbReference>
<dbReference type="SMR" id="B0JNA9"/>
<dbReference type="STRING" id="449447.MAE_04510"/>
<dbReference type="PaxDb" id="449447-MAE_04510"/>
<dbReference type="EnsemblBacteria" id="BAG00273">
    <property type="protein sequence ID" value="BAG00273"/>
    <property type="gene ID" value="MAE_04510"/>
</dbReference>
<dbReference type="KEGG" id="mar:MAE_04510"/>
<dbReference type="PATRIC" id="fig|449447.4.peg.425"/>
<dbReference type="eggNOG" id="COG0829">
    <property type="taxonomic scope" value="Bacteria"/>
</dbReference>
<dbReference type="HOGENOM" id="CLU_056339_0_0_3"/>
<dbReference type="BioCyc" id="MAER449447:MAE_RS02075-MONOMER"/>
<dbReference type="Proteomes" id="UP000001510">
    <property type="component" value="Chromosome"/>
</dbReference>
<dbReference type="GO" id="GO:0005737">
    <property type="term" value="C:cytoplasm"/>
    <property type="evidence" value="ECO:0007669"/>
    <property type="project" value="UniProtKB-SubCell"/>
</dbReference>
<dbReference type="GO" id="GO:0016151">
    <property type="term" value="F:nickel cation binding"/>
    <property type="evidence" value="ECO:0007669"/>
    <property type="project" value="UniProtKB-UniRule"/>
</dbReference>
<dbReference type="HAMAP" id="MF_01384">
    <property type="entry name" value="UreD"/>
    <property type="match status" value="1"/>
</dbReference>
<dbReference type="InterPro" id="IPR002669">
    <property type="entry name" value="UreD"/>
</dbReference>
<dbReference type="PANTHER" id="PTHR33643">
    <property type="entry name" value="UREASE ACCESSORY PROTEIN D"/>
    <property type="match status" value="1"/>
</dbReference>
<dbReference type="PANTHER" id="PTHR33643:SF1">
    <property type="entry name" value="UREASE ACCESSORY PROTEIN D"/>
    <property type="match status" value="1"/>
</dbReference>
<dbReference type="Pfam" id="PF01774">
    <property type="entry name" value="UreD"/>
    <property type="match status" value="1"/>
</dbReference>
<organism>
    <name type="scientific">Microcystis aeruginosa (strain NIES-843 / IAM M-2473)</name>
    <dbReference type="NCBI Taxonomy" id="449447"/>
    <lineage>
        <taxon>Bacteria</taxon>
        <taxon>Bacillati</taxon>
        <taxon>Cyanobacteriota</taxon>
        <taxon>Cyanophyceae</taxon>
        <taxon>Oscillatoriophycideae</taxon>
        <taxon>Chroococcales</taxon>
        <taxon>Microcystaceae</taxon>
        <taxon>Microcystis</taxon>
    </lineage>
</organism>
<reference key="1">
    <citation type="journal article" date="2007" name="DNA Res.">
        <title>Complete genomic structure of the bloom-forming toxic cyanobacterium Microcystis aeruginosa NIES-843.</title>
        <authorList>
            <person name="Kaneko T."/>
            <person name="Nakajima N."/>
            <person name="Okamoto S."/>
            <person name="Suzuki I."/>
            <person name="Tanabe Y."/>
            <person name="Tamaoki M."/>
            <person name="Nakamura Y."/>
            <person name="Kasai F."/>
            <person name="Watanabe A."/>
            <person name="Kawashima K."/>
            <person name="Kishida Y."/>
            <person name="Ono A."/>
            <person name="Shimizu Y."/>
            <person name="Takahashi C."/>
            <person name="Minami C."/>
            <person name="Fujishiro T."/>
            <person name="Kohara M."/>
            <person name="Katoh M."/>
            <person name="Nakazaki N."/>
            <person name="Nakayama S."/>
            <person name="Yamada M."/>
            <person name="Tabata S."/>
            <person name="Watanabe M.M."/>
        </authorList>
    </citation>
    <scope>NUCLEOTIDE SEQUENCE [LARGE SCALE GENOMIC DNA]</scope>
    <source>
        <strain>NIES-843 / IAM M-247</strain>
    </source>
</reference>
<protein>
    <recommendedName>
        <fullName evidence="1">Urease accessory protein UreD</fullName>
    </recommendedName>
</protein>
<accession>B0JNA9</accession>